<proteinExistence type="inferred from homology"/>
<organism>
    <name type="scientific">Schizosaccharomyces pombe (strain 972 / ATCC 24843)</name>
    <name type="common">Fission yeast</name>
    <dbReference type="NCBI Taxonomy" id="284812"/>
    <lineage>
        <taxon>Eukaryota</taxon>
        <taxon>Fungi</taxon>
        <taxon>Dikarya</taxon>
        <taxon>Ascomycota</taxon>
        <taxon>Taphrinomycotina</taxon>
        <taxon>Schizosaccharomycetes</taxon>
        <taxon>Schizosaccharomycetales</taxon>
        <taxon>Schizosaccharomycetaceae</taxon>
        <taxon>Schizosaccharomyces</taxon>
    </lineage>
</organism>
<evidence type="ECO:0000250" key="1"/>
<evidence type="ECO:0000305" key="2"/>
<dbReference type="EMBL" id="CU329670">
    <property type="protein sequence ID" value="CAA93685.1"/>
    <property type="molecule type" value="Genomic_DNA"/>
</dbReference>
<dbReference type="PIR" id="T37854">
    <property type="entry name" value="T37854"/>
</dbReference>
<dbReference type="SMR" id="Q10314"/>
<dbReference type="BioGRID" id="278630">
    <property type="interactions" value="12"/>
</dbReference>
<dbReference type="FunCoup" id="Q10314">
    <property type="interactions" value="387"/>
</dbReference>
<dbReference type="STRING" id="284812.Q10314"/>
<dbReference type="iPTMnet" id="Q10314"/>
<dbReference type="PaxDb" id="4896-SPAC17G8.02.1"/>
<dbReference type="EnsemblFungi" id="SPAC17G8.02.1">
    <property type="protein sequence ID" value="SPAC17G8.02.1:pep"/>
    <property type="gene ID" value="SPAC17G8.02"/>
</dbReference>
<dbReference type="KEGG" id="spo:2542154"/>
<dbReference type="PomBase" id="SPAC17G8.02"/>
<dbReference type="VEuPathDB" id="FungiDB:SPAC17G8.02"/>
<dbReference type="eggNOG" id="KOG2938">
    <property type="taxonomic scope" value="Eukaryota"/>
</dbReference>
<dbReference type="HOGENOM" id="CLU_036838_2_0_1"/>
<dbReference type="InParanoid" id="Q10314"/>
<dbReference type="OMA" id="WVGVETK"/>
<dbReference type="PhylomeDB" id="Q10314"/>
<dbReference type="PRO" id="PR:Q10314"/>
<dbReference type="Proteomes" id="UP000002485">
    <property type="component" value="Chromosome I"/>
</dbReference>
<dbReference type="GO" id="GO:0005829">
    <property type="term" value="C:cytosol"/>
    <property type="evidence" value="ECO:0000318"/>
    <property type="project" value="GO_Central"/>
</dbReference>
<dbReference type="GO" id="GO:0005634">
    <property type="term" value="C:nucleus"/>
    <property type="evidence" value="ECO:0007005"/>
    <property type="project" value="PomBase"/>
</dbReference>
<dbReference type="GO" id="GO:0070635">
    <property type="term" value="F:nicotinamide riboside hydrolase activity"/>
    <property type="evidence" value="ECO:0000266"/>
    <property type="project" value="PomBase"/>
</dbReference>
<dbReference type="GO" id="GO:0070636">
    <property type="term" value="F:nicotinic acid riboside hydrolase activity"/>
    <property type="evidence" value="ECO:0000266"/>
    <property type="project" value="PomBase"/>
</dbReference>
<dbReference type="GO" id="GO:0008477">
    <property type="term" value="F:purine nucleosidase activity"/>
    <property type="evidence" value="ECO:0000318"/>
    <property type="project" value="GO_Central"/>
</dbReference>
<dbReference type="GO" id="GO:0045437">
    <property type="term" value="F:uridine nucleosidase activity"/>
    <property type="evidence" value="ECO:0000266"/>
    <property type="project" value="PomBase"/>
</dbReference>
<dbReference type="GO" id="GO:0019358">
    <property type="term" value="P:nicotinate nucleotide salvage"/>
    <property type="evidence" value="ECO:0000266"/>
    <property type="project" value="PomBase"/>
</dbReference>
<dbReference type="GO" id="GO:0006152">
    <property type="term" value="P:purine nucleoside catabolic process"/>
    <property type="evidence" value="ECO:0000318"/>
    <property type="project" value="GO_Central"/>
</dbReference>
<dbReference type="GO" id="GO:0046135">
    <property type="term" value="P:pyrimidine nucleoside catabolic process"/>
    <property type="evidence" value="ECO:0000266"/>
    <property type="project" value="PomBase"/>
</dbReference>
<dbReference type="GO" id="GO:0008655">
    <property type="term" value="P:pyrimidine-containing compound salvage"/>
    <property type="evidence" value="ECO:0000266"/>
    <property type="project" value="PomBase"/>
</dbReference>
<dbReference type="CDD" id="cd02651">
    <property type="entry name" value="nuc_hydro_IU_UC_XIUA"/>
    <property type="match status" value="1"/>
</dbReference>
<dbReference type="Gene3D" id="3.90.245.10">
    <property type="entry name" value="Ribonucleoside hydrolase-like"/>
    <property type="match status" value="1"/>
</dbReference>
<dbReference type="InterPro" id="IPR015910">
    <property type="entry name" value="I/U_nuclsd_hydro_CS"/>
</dbReference>
<dbReference type="InterPro" id="IPR001910">
    <property type="entry name" value="Inosine/uridine_hydrolase_dom"/>
</dbReference>
<dbReference type="InterPro" id="IPR023186">
    <property type="entry name" value="IUNH"/>
</dbReference>
<dbReference type="InterPro" id="IPR036452">
    <property type="entry name" value="Ribo_hydro-like"/>
</dbReference>
<dbReference type="PANTHER" id="PTHR12304">
    <property type="entry name" value="INOSINE-URIDINE PREFERRING NUCLEOSIDE HYDROLASE"/>
    <property type="match status" value="1"/>
</dbReference>
<dbReference type="PANTHER" id="PTHR12304:SF4">
    <property type="entry name" value="URIDINE NUCLEOSIDASE"/>
    <property type="match status" value="1"/>
</dbReference>
<dbReference type="Pfam" id="PF01156">
    <property type="entry name" value="IU_nuc_hydro"/>
    <property type="match status" value="1"/>
</dbReference>
<dbReference type="SUPFAM" id="SSF53590">
    <property type="entry name" value="Nucleoside hydrolase"/>
    <property type="match status" value="1"/>
</dbReference>
<dbReference type="PROSITE" id="PS01247">
    <property type="entry name" value="IUNH"/>
    <property type="match status" value="1"/>
</dbReference>
<reference key="1">
    <citation type="journal article" date="2002" name="Nature">
        <title>The genome sequence of Schizosaccharomyces pombe.</title>
        <authorList>
            <person name="Wood V."/>
            <person name="Gwilliam R."/>
            <person name="Rajandream M.A."/>
            <person name="Lyne M.H."/>
            <person name="Lyne R."/>
            <person name="Stewart A."/>
            <person name="Sgouros J.G."/>
            <person name="Peat N."/>
            <person name="Hayles J."/>
            <person name="Baker S.G."/>
            <person name="Basham D."/>
            <person name="Bowman S."/>
            <person name="Brooks K."/>
            <person name="Brown D."/>
            <person name="Brown S."/>
            <person name="Chillingworth T."/>
            <person name="Churcher C.M."/>
            <person name="Collins M."/>
            <person name="Connor R."/>
            <person name="Cronin A."/>
            <person name="Davis P."/>
            <person name="Feltwell T."/>
            <person name="Fraser A."/>
            <person name="Gentles S."/>
            <person name="Goble A."/>
            <person name="Hamlin N."/>
            <person name="Harris D.E."/>
            <person name="Hidalgo J."/>
            <person name="Hodgson G."/>
            <person name="Holroyd S."/>
            <person name="Hornsby T."/>
            <person name="Howarth S."/>
            <person name="Huckle E.J."/>
            <person name="Hunt S."/>
            <person name="Jagels K."/>
            <person name="James K.D."/>
            <person name="Jones L."/>
            <person name="Jones M."/>
            <person name="Leather S."/>
            <person name="McDonald S."/>
            <person name="McLean J."/>
            <person name="Mooney P."/>
            <person name="Moule S."/>
            <person name="Mungall K.L."/>
            <person name="Murphy L.D."/>
            <person name="Niblett D."/>
            <person name="Odell C."/>
            <person name="Oliver K."/>
            <person name="O'Neil S."/>
            <person name="Pearson D."/>
            <person name="Quail M.A."/>
            <person name="Rabbinowitsch E."/>
            <person name="Rutherford K.M."/>
            <person name="Rutter S."/>
            <person name="Saunders D."/>
            <person name="Seeger K."/>
            <person name="Sharp S."/>
            <person name="Skelton J."/>
            <person name="Simmonds M.N."/>
            <person name="Squares R."/>
            <person name="Squares S."/>
            <person name="Stevens K."/>
            <person name="Taylor K."/>
            <person name="Taylor R.G."/>
            <person name="Tivey A."/>
            <person name="Walsh S.V."/>
            <person name="Warren T."/>
            <person name="Whitehead S."/>
            <person name="Woodward J.R."/>
            <person name="Volckaert G."/>
            <person name="Aert R."/>
            <person name="Robben J."/>
            <person name="Grymonprez B."/>
            <person name="Weltjens I."/>
            <person name="Vanstreels E."/>
            <person name="Rieger M."/>
            <person name="Schaefer M."/>
            <person name="Mueller-Auer S."/>
            <person name="Gabel C."/>
            <person name="Fuchs M."/>
            <person name="Duesterhoeft A."/>
            <person name="Fritzc C."/>
            <person name="Holzer E."/>
            <person name="Moestl D."/>
            <person name="Hilbert H."/>
            <person name="Borzym K."/>
            <person name="Langer I."/>
            <person name="Beck A."/>
            <person name="Lehrach H."/>
            <person name="Reinhardt R."/>
            <person name="Pohl T.M."/>
            <person name="Eger P."/>
            <person name="Zimmermann W."/>
            <person name="Wedler H."/>
            <person name="Wambutt R."/>
            <person name="Purnelle B."/>
            <person name="Goffeau A."/>
            <person name="Cadieu E."/>
            <person name="Dreano S."/>
            <person name="Gloux S."/>
            <person name="Lelaure V."/>
            <person name="Mottier S."/>
            <person name="Galibert F."/>
            <person name="Aves S.J."/>
            <person name="Xiang Z."/>
            <person name="Hunt C."/>
            <person name="Moore K."/>
            <person name="Hurst S.M."/>
            <person name="Lucas M."/>
            <person name="Rochet M."/>
            <person name="Gaillardin C."/>
            <person name="Tallada V.A."/>
            <person name="Garzon A."/>
            <person name="Thode G."/>
            <person name="Daga R.R."/>
            <person name="Cruzado L."/>
            <person name="Jimenez J."/>
            <person name="Sanchez M."/>
            <person name="del Rey F."/>
            <person name="Benito J."/>
            <person name="Dominguez A."/>
            <person name="Revuelta J.L."/>
            <person name="Moreno S."/>
            <person name="Armstrong J."/>
            <person name="Forsburg S.L."/>
            <person name="Cerutti L."/>
            <person name="Lowe T."/>
            <person name="McCombie W.R."/>
            <person name="Paulsen I."/>
            <person name="Potashkin J."/>
            <person name="Shpakovski G.V."/>
            <person name="Ussery D."/>
            <person name="Barrell B.G."/>
            <person name="Nurse P."/>
        </authorList>
    </citation>
    <scope>NUCLEOTIDE SEQUENCE [LARGE SCALE GENOMIC DNA]</scope>
    <source>
        <strain>972 / ATCC 24843</strain>
    </source>
</reference>
<name>YD62_SCHPO</name>
<gene>
    <name type="ORF">SPAC17G8.02</name>
</gene>
<comment type="similarity">
    <text evidence="2">Belongs to the IUNH family.</text>
</comment>
<feature type="chain" id="PRO_0000206841" description="Uncharacterized protein C17G8.02">
    <location>
        <begin position="1"/>
        <end position="330"/>
    </location>
</feature>
<feature type="active site" evidence="1">
    <location>
        <position position="257"/>
    </location>
</feature>
<sequence length="330" mass="36063">MTNTIDSFQKGSALENYNIWIDCDPGHDDVVALTLAACAGHCKILGVSTVHGNTTLEFTTKNALAVMELLNQDVDVHAGAAKPLMRESAFATHIHGTNGLAGISLLPDYPKKKATPDAVFAMYTTISNYPEPVTLVATGPLTNIALLLATYPSVTDNIERFIFMGGSTGIGNITSQAEFNVYADPEAARLVLETKSLIGKLFMVPLDVTHKVLLDANIIQLLRQHSNPFSSTLVELMTVFQQTYENVYGIRNGVPVHDVCAVALALWPSLWTSRSMYVTVSLDSLTLGRTVCDVWSQQNQYPANVHVVLEADVSLFWETFIGVIDRLNYL</sequence>
<protein>
    <recommendedName>
        <fullName>Uncharacterized protein C17G8.02</fullName>
    </recommendedName>
</protein>
<keyword id="KW-0326">Glycosidase</keyword>
<keyword id="KW-0378">Hydrolase</keyword>
<keyword id="KW-1185">Reference proteome</keyword>
<accession>Q10314</accession>